<comment type="function">
    <text evidence="3">Catalyzes the production of pinosylvin from cinnamoyl-CoA and malonyl-CoA, and dihydropinosylvin from dihydrocinnamoyl-CoA.</text>
</comment>
<comment type="catalytic activity">
    <reaction evidence="3">
        <text>(E)-cinnamoyl-CoA + 3 malonyl-CoA + 3 H(+) = (E)-pinosylvin + 4 CO2 + 4 CoA</text>
        <dbReference type="Rhea" id="RHEA:12552"/>
        <dbReference type="ChEBI" id="CHEBI:15378"/>
        <dbReference type="ChEBI" id="CHEBI:16526"/>
        <dbReference type="ChEBI" id="CHEBI:17323"/>
        <dbReference type="ChEBI" id="CHEBI:57252"/>
        <dbReference type="ChEBI" id="CHEBI:57287"/>
        <dbReference type="ChEBI" id="CHEBI:57384"/>
        <dbReference type="EC" id="2.3.1.146"/>
    </reaction>
</comment>
<comment type="catalytic activity">
    <reaction evidence="3">
        <text>3-phenylpropanoyl-CoA + 3 malonyl-CoA + 3 H(+) = dihydropinosylvin + 4 CO2 + 4 CoA</text>
        <dbReference type="Rhea" id="RHEA:46096"/>
        <dbReference type="ChEBI" id="CHEBI:4579"/>
        <dbReference type="ChEBI" id="CHEBI:15378"/>
        <dbReference type="ChEBI" id="CHEBI:16526"/>
        <dbReference type="ChEBI" id="CHEBI:57287"/>
        <dbReference type="ChEBI" id="CHEBI:57384"/>
        <dbReference type="ChEBI" id="CHEBI:85676"/>
    </reaction>
</comment>
<comment type="biophysicochemical properties">
    <kinetics>
        <KM evidence="3">1 uM for cinnamoyl-CoA</KM>
        <KM evidence="3">5 uM for dihydrocinnamoyl-CoA</KM>
        <Vmax evidence="3">0.12 nmol/sec/mg enzyme with cinnamoyl-CoA as substrate</Vmax>
        <Vmax evidence="3">0.15 nmol/sec/mg enzyme with dihydrocinnamoyl-CoA as substrate</Vmax>
    </kinetics>
</comment>
<comment type="pathway">
    <text>Phytoalexin biosynthesis; hydropinosylvin biosynthesis.</text>
</comment>
<comment type="subunit">
    <text evidence="4">Homodimer.</text>
</comment>
<comment type="subcellular location">
    <subcellularLocation>
        <location>Cytoplasm</location>
    </subcellularLocation>
</comment>
<comment type="induction">
    <text>By stress.</text>
</comment>
<comment type="similarity">
    <text evidence="6">Belongs to the thiolase-like superfamily. Chalcone/stilbene synthases family.</text>
</comment>
<protein>
    <recommendedName>
        <fullName evidence="5">Pinosylvin synthase</fullName>
        <ecNumber evidence="3">2.3.1.146</ecNumber>
    </recommendedName>
    <alternativeName>
        <fullName evidence="5">Dihydropinosylvin synthase</fullName>
    </alternativeName>
    <alternativeName>
        <fullName>Pinosylvin-forming stilbene synthase</fullName>
    </alternativeName>
    <alternativeName>
        <fullName>Stilbene synthase</fullName>
        <shortName>STS</shortName>
    </alternativeName>
</protein>
<accession>Q02323</accession>
<name>DPSS_PINSY</name>
<reference key="1">
    <citation type="journal article" date="1992" name="Plant Mol. Biol.">
        <title>Molecular analysis of chalcone and dihydropinosylvin synthase from Scots pine (Pinus sylvestris), and differential regulation of these and related enzyme activities in stressed plants.</title>
        <authorList>
            <person name="Fliegmann J."/>
            <person name="Schroeder G."/>
            <person name="Schanz S."/>
            <person name="Britsch L."/>
            <person name="Schroeder J."/>
        </authorList>
    </citation>
    <scope>NUCLEOTIDE SEQUENCE [GENOMIC DNA]</scope>
</reference>
<reference key="2">
    <citation type="journal article" date="1992" name="FEBS Lett.">
        <title>Pine stilbene synthase cDNA, a tool for probing environmental stress.</title>
        <authorList>
            <person name="Schwekendiek A."/>
            <person name="Pfeffer G."/>
            <person name="Kindl H."/>
        </authorList>
    </citation>
    <scope>NUCLEOTIDE SEQUENCE [MRNA]</scope>
</reference>
<reference key="3">
    <citation type="journal article" date="1992" name="J. Biol. Chem.">
        <title>A single change of histidine to glutamine alters the substrate preference of a stilbene synthase.</title>
        <authorList>
            <person name="Schroeder G."/>
            <person name="Schroeder J."/>
        </authorList>
    </citation>
    <scope>NUCLEOTIDE SEQUENCE [GENOMIC DNA] OF 161-172</scope>
    <scope>FUNCTION</scope>
    <scope>MUTAGENESIS</scope>
</reference>
<reference key="4">
    <citation type="journal article" date="1992" name="FEBS Lett.">
        <title>Stilbene synthase from Scots pine (Pinus sylvestris).</title>
        <authorList>
            <person name="Schanz S."/>
            <person name="Schroeder G."/>
            <person name="Schroeder J."/>
        </authorList>
    </citation>
    <scope>FUNCTION</scope>
    <scope>CATALYTIC ACTIVITY</scope>
    <scope>BIOPHYSICOCHEMICAL PROPERTIES</scope>
</reference>
<reference key="5">
    <citation type="journal article" date="2004" name="Chem. Biol.">
        <title>An aldol switch discovered in stilbene synthases mediates cyclization specificity of type III polyketide synthases.</title>
        <authorList>
            <person name="Austin M.B."/>
            <person name="Bowman M.E."/>
            <person name="Ferrer J.-L."/>
            <person name="Schroeder J."/>
            <person name="Noel J.P."/>
        </authorList>
    </citation>
    <scope>X-RAY CRYSTALLOGRAPHY (2.11 ANGSTROMS)</scope>
    <scope>REACTION MECHANISM</scope>
</reference>
<reference key="6">
    <citation type="submission" date="2004-09" db="PDB data bank">
        <title>Crystal structure of stilbene synthase from Pinus sylvestris, complexed with methylmalonyl CoA.</title>
        <authorList>
            <person name="Ng S.H."/>
            <person name="Chirgadze D."/>
            <person name="Spiteller D."/>
            <person name="Li T.L."/>
            <person name="Spencer J.B."/>
            <person name="Blundell T.L."/>
        </authorList>
    </citation>
    <scope>X-RAY CRYSTALLOGRAPHY (1.70 ANGSTROMS) IN COMPLEX WITH METHYLMALONYL COA</scope>
</reference>
<proteinExistence type="evidence at protein level"/>
<feature type="chain" id="PRO_0000216078" description="Pinosylvin synthase">
    <location>
        <begin position="1"/>
        <end position="393"/>
    </location>
</feature>
<feature type="active site" evidence="1">
    <location>
        <position position="167"/>
    </location>
</feature>
<feature type="binding site">
    <location>
        <begin position="57"/>
        <end position="60"/>
    </location>
    <ligand>
        <name>substrate</name>
    </ligand>
</feature>
<feature type="binding site">
    <location>
        <position position="270"/>
    </location>
    <ligand>
        <name>substrate</name>
    </ligand>
</feature>
<feature type="binding site">
    <location>
        <begin position="308"/>
        <end position="310"/>
    </location>
    <ligand>
        <name>substrate</name>
    </ligand>
</feature>
<feature type="mutagenesis site" description="Reduced activity." evidence="2">
    <original>H</original>
    <variation>Q</variation>
    <location>
        <position position="165"/>
    </location>
</feature>
<feature type="sequence conflict" description="In Ref. 2; AAB24341." evidence="6" ref="2">
    <original>H</original>
    <variation>N</variation>
    <location>
        <position position="306"/>
    </location>
</feature>
<feature type="sequence conflict" description="In Ref. 2; AAB24341." evidence="6" ref="2">
    <original>R</original>
    <variation>P</variation>
    <location>
        <position position="310"/>
    </location>
</feature>
<feature type="sequence conflict" description="In Ref. 2; AAB24341." evidence="6" ref="2">
    <original>V</original>
    <variation>F</variation>
    <location>
        <position position="345"/>
    </location>
</feature>
<feature type="sequence conflict" description="In Ref. 2; AAB24341." evidence="6" ref="2">
    <original>Q</original>
    <variation>E</variation>
    <location>
        <position position="358"/>
    </location>
</feature>
<feature type="sequence conflict" description="In Ref. 2; AAB24341." evidence="6" ref="2">
    <original>C</original>
    <variation>F</variation>
    <location>
        <position position="361"/>
    </location>
</feature>
<feature type="sequence conflict" description="In Ref. 2; AAB24341." evidence="6" ref="2">
    <location>
        <position position="378"/>
    </location>
</feature>
<feature type="helix" evidence="7">
    <location>
        <begin position="7"/>
        <end position="13"/>
    </location>
</feature>
<feature type="strand" evidence="7">
    <location>
        <begin position="19"/>
        <end position="27"/>
    </location>
</feature>
<feature type="strand" evidence="7">
    <location>
        <begin position="32"/>
        <end position="34"/>
    </location>
</feature>
<feature type="helix" evidence="7">
    <location>
        <begin position="35"/>
        <end position="37"/>
    </location>
</feature>
<feature type="helix" evidence="7">
    <location>
        <begin position="38"/>
        <end position="45"/>
    </location>
</feature>
<feature type="helix" evidence="7">
    <location>
        <begin position="52"/>
        <end position="63"/>
    </location>
</feature>
<feature type="strand" evidence="7">
    <location>
        <begin position="69"/>
        <end position="71"/>
    </location>
</feature>
<feature type="helix" evidence="7">
    <location>
        <begin position="76"/>
        <end position="80"/>
    </location>
</feature>
<feature type="helix" evidence="7">
    <location>
        <begin position="83"/>
        <end position="86"/>
    </location>
</feature>
<feature type="strand" evidence="7">
    <location>
        <begin position="87"/>
        <end position="91"/>
    </location>
</feature>
<feature type="helix" evidence="7">
    <location>
        <begin position="94"/>
        <end position="120"/>
    </location>
</feature>
<feature type="helix" evidence="7">
    <location>
        <begin position="124"/>
        <end position="126"/>
    </location>
</feature>
<feature type="strand" evidence="7">
    <location>
        <begin position="129"/>
        <end position="135"/>
    </location>
</feature>
<feature type="strand" evidence="7">
    <location>
        <begin position="139"/>
        <end position="141"/>
    </location>
</feature>
<feature type="helix" evidence="7">
    <location>
        <begin position="143"/>
        <end position="151"/>
    </location>
</feature>
<feature type="strand" evidence="7">
    <location>
        <begin position="158"/>
        <end position="164"/>
    </location>
</feature>
<feature type="helix" evidence="7">
    <location>
        <begin position="169"/>
        <end position="182"/>
    </location>
</feature>
<feature type="strand" evidence="7">
    <location>
        <begin position="189"/>
        <end position="195"/>
    </location>
</feature>
<feature type="turn" evidence="7">
    <location>
        <begin position="197"/>
        <end position="200"/>
    </location>
</feature>
<feature type="helix" evidence="7">
    <location>
        <begin position="209"/>
        <end position="217"/>
    </location>
</feature>
<feature type="strand" evidence="7">
    <location>
        <begin position="221"/>
        <end position="230"/>
    </location>
</feature>
<feature type="turn" evidence="7">
    <location>
        <begin position="233"/>
        <end position="235"/>
    </location>
</feature>
<feature type="strand" evidence="7">
    <location>
        <begin position="239"/>
        <end position="249"/>
    </location>
</feature>
<feature type="strand" evidence="7">
    <location>
        <begin position="256"/>
        <end position="262"/>
    </location>
</feature>
<feature type="strand" evidence="7">
    <location>
        <begin position="265"/>
        <end position="270"/>
    </location>
</feature>
<feature type="helix" evidence="7">
    <location>
        <begin position="274"/>
        <end position="290"/>
    </location>
</feature>
<feature type="helix" evidence="7">
    <location>
        <begin position="291"/>
        <end position="293"/>
    </location>
</feature>
<feature type="helix" evidence="7">
    <location>
        <begin position="298"/>
        <end position="300"/>
    </location>
</feature>
<feature type="strand" evidence="7">
    <location>
        <begin position="301"/>
        <end position="305"/>
    </location>
</feature>
<feature type="helix" evidence="7">
    <location>
        <begin position="310"/>
        <end position="319"/>
    </location>
</feature>
<feature type="turn" evidence="7">
    <location>
        <begin position="324"/>
        <end position="327"/>
    </location>
</feature>
<feature type="helix" evidence="7">
    <location>
        <begin position="328"/>
        <end position="337"/>
    </location>
</feature>
<feature type="helix" evidence="7">
    <location>
        <begin position="341"/>
        <end position="343"/>
    </location>
</feature>
<feature type="helix" evidence="7">
    <location>
        <begin position="344"/>
        <end position="358"/>
    </location>
</feature>
<feature type="turn" evidence="7">
    <location>
        <begin position="364"/>
        <end position="367"/>
    </location>
</feature>
<feature type="strand" evidence="7">
    <location>
        <begin position="369"/>
        <end position="377"/>
    </location>
</feature>
<feature type="turn" evidence="7">
    <location>
        <begin position="378"/>
        <end position="380"/>
    </location>
</feature>
<feature type="strand" evidence="7">
    <location>
        <begin position="381"/>
        <end position="389"/>
    </location>
</feature>
<dbReference type="EC" id="2.3.1.146" evidence="3"/>
<dbReference type="EMBL" id="X60753">
    <property type="protein sequence ID" value="CAA43165.1"/>
    <property type="molecule type" value="Genomic_DNA"/>
</dbReference>
<dbReference type="EMBL" id="S50350">
    <property type="protein sequence ID" value="AAB24341.2"/>
    <property type="molecule type" value="mRNA"/>
</dbReference>
<dbReference type="EMBL" id="L00659">
    <property type="protein sequence ID" value="AAA50524.1"/>
    <property type="molecule type" value="Genomic_DNA"/>
</dbReference>
<dbReference type="EMBL" id="L00660">
    <property type="protein sequence ID" value="AAA50525.1"/>
    <property type="molecule type" value="Genomic_DNA"/>
</dbReference>
<dbReference type="PIR" id="S20514">
    <property type="entry name" value="S20514"/>
</dbReference>
<dbReference type="PIR" id="S21123">
    <property type="entry name" value="S21123"/>
</dbReference>
<dbReference type="PDB" id="1U0U">
    <property type="method" value="X-ray"/>
    <property type="resolution" value="2.11 A"/>
    <property type="chains" value="A/B/C/D/E/F=1-393"/>
</dbReference>
<dbReference type="PDB" id="1XES">
    <property type="method" value="X-ray"/>
    <property type="resolution" value="1.70 A"/>
    <property type="chains" value="A/B/C/D=1-393"/>
</dbReference>
<dbReference type="PDB" id="1XET">
    <property type="method" value="X-ray"/>
    <property type="resolution" value="2.00 A"/>
    <property type="chains" value="A/B/C/D=1-393"/>
</dbReference>
<dbReference type="PDBsum" id="1U0U"/>
<dbReference type="PDBsum" id="1XES"/>
<dbReference type="PDBsum" id="1XET"/>
<dbReference type="SMR" id="Q02323"/>
<dbReference type="BRENDA" id="2.3.1.146">
    <property type="organism ID" value="4856"/>
</dbReference>
<dbReference type="SABIO-RK" id="Q02323"/>
<dbReference type="UniPathway" id="UPA00374"/>
<dbReference type="EvolutionaryTrace" id="Q02323"/>
<dbReference type="GO" id="GO:0005737">
    <property type="term" value="C:cytoplasm"/>
    <property type="evidence" value="ECO:0007669"/>
    <property type="project" value="UniProtKB-SubCell"/>
</dbReference>
<dbReference type="GO" id="GO:0050198">
    <property type="term" value="F:pinosylvin synthase activity"/>
    <property type="evidence" value="ECO:0007669"/>
    <property type="project" value="UniProtKB-EC"/>
</dbReference>
<dbReference type="GO" id="GO:0030639">
    <property type="term" value="P:polyketide biosynthetic process"/>
    <property type="evidence" value="ECO:0007669"/>
    <property type="project" value="TreeGrafter"/>
</dbReference>
<dbReference type="CDD" id="cd00831">
    <property type="entry name" value="CHS_like"/>
    <property type="match status" value="1"/>
</dbReference>
<dbReference type="FunFam" id="3.40.47.10:FF:000014">
    <property type="entry name" value="Chalcone synthase 1"/>
    <property type="match status" value="1"/>
</dbReference>
<dbReference type="FunFam" id="3.40.47.10:FF:000025">
    <property type="entry name" value="Chalcone synthase 2"/>
    <property type="match status" value="1"/>
</dbReference>
<dbReference type="Gene3D" id="3.40.47.10">
    <property type="match status" value="2"/>
</dbReference>
<dbReference type="InterPro" id="IPR012328">
    <property type="entry name" value="Chalcone/stilbene_synt_C"/>
</dbReference>
<dbReference type="InterPro" id="IPR001099">
    <property type="entry name" value="Chalcone/stilbene_synt_N"/>
</dbReference>
<dbReference type="InterPro" id="IPR018088">
    <property type="entry name" value="Chalcone/stilbene_synthase_AS"/>
</dbReference>
<dbReference type="InterPro" id="IPR011141">
    <property type="entry name" value="Polyketide_synthase_type-III"/>
</dbReference>
<dbReference type="InterPro" id="IPR016039">
    <property type="entry name" value="Thiolase-like"/>
</dbReference>
<dbReference type="PANTHER" id="PTHR11877:SF14">
    <property type="entry name" value="CHALCONE SYNTHASE"/>
    <property type="match status" value="1"/>
</dbReference>
<dbReference type="PANTHER" id="PTHR11877">
    <property type="entry name" value="HYDROXYMETHYLGLUTARYL-COA SYNTHASE"/>
    <property type="match status" value="1"/>
</dbReference>
<dbReference type="Pfam" id="PF02797">
    <property type="entry name" value="Chal_sti_synt_C"/>
    <property type="match status" value="1"/>
</dbReference>
<dbReference type="Pfam" id="PF00195">
    <property type="entry name" value="Chal_sti_synt_N"/>
    <property type="match status" value="1"/>
</dbReference>
<dbReference type="PIRSF" id="PIRSF000451">
    <property type="entry name" value="PKS_III"/>
    <property type="match status" value="1"/>
</dbReference>
<dbReference type="SUPFAM" id="SSF53901">
    <property type="entry name" value="Thiolase-like"/>
    <property type="match status" value="2"/>
</dbReference>
<dbReference type="PROSITE" id="PS00441">
    <property type="entry name" value="CHALCONE_SYNTH"/>
    <property type="match status" value="1"/>
</dbReference>
<sequence length="393" mass="42735">MGGVDFEGFRKLQRADGFASILAIGTANPPNAVDQSTYPDFYFRITGNEHNTELKDKFKRICERSAIKQRYMYLTEEILKKNPDVCAFVEVPSLDARQAMLAMEVPRLAKEAAEKAIQEWGQSKSGITHLIFCSTTTPDLPGADFEVAKLLGLHPSVKRVGVFQHGCFAGGTVLRMAKDLAENNRGARVLVICSETTAVTFRGPSETHLDSLVGQALFGDGASALIVGADPIPQVEKACFEIVWTAQTVVPNSEGAIGGKVREVGLTFQLKGAVPDLISANIENCMVEAFSQFKISDWNKLFWVVHPGGRAILDRVEAKLNLDPTKLIPTRHVMSEYGNMSSACVHFILDQTRKASLQNGCSTTGEGLEMGVLFGFGPGLTIETVVLKSVPIQ</sequence>
<organism>
    <name type="scientific">Pinus sylvestris</name>
    <name type="common">Scotch pine</name>
    <dbReference type="NCBI Taxonomy" id="3349"/>
    <lineage>
        <taxon>Eukaryota</taxon>
        <taxon>Viridiplantae</taxon>
        <taxon>Streptophyta</taxon>
        <taxon>Embryophyta</taxon>
        <taxon>Tracheophyta</taxon>
        <taxon>Spermatophyta</taxon>
        <taxon>Pinopsida</taxon>
        <taxon>Pinidae</taxon>
        <taxon>Conifers I</taxon>
        <taxon>Pinales</taxon>
        <taxon>Pinaceae</taxon>
        <taxon>Pinus</taxon>
        <taxon>Pinus subgen. Pinus</taxon>
    </lineage>
</organism>
<keyword id="KW-0002">3D-structure</keyword>
<keyword id="KW-0012">Acyltransferase</keyword>
<keyword id="KW-0963">Cytoplasm</keyword>
<keyword id="KW-0346">Stress response</keyword>
<keyword id="KW-0808">Transferase</keyword>
<evidence type="ECO:0000255" key="1">
    <source>
        <dbReference type="PROSITE-ProRule" id="PRU10023"/>
    </source>
</evidence>
<evidence type="ECO:0000269" key="2">
    <source>
    </source>
</evidence>
<evidence type="ECO:0000269" key="3">
    <source>
    </source>
</evidence>
<evidence type="ECO:0000269" key="4">
    <source ref="6"/>
</evidence>
<evidence type="ECO:0000303" key="5">
    <source>
    </source>
</evidence>
<evidence type="ECO:0000305" key="6"/>
<evidence type="ECO:0007829" key="7">
    <source>
        <dbReference type="PDB" id="1XES"/>
    </source>
</evidence>